<reference key="1">
    <citation type="journal article" date="1994" name="Cell">
        <title>Cooperative interaction of S. pombe proteins required for mating and morphogenesis.</title>
        <authorList>
            <person name="Chang E.C."/>
            <person name="Barr M."/>
            <person name="Wang Y."/>
            <person name="Jung V."/>
            <person name="Xu H.-P."/>
            <person name="Wigler M.H."/>
        </authorList>
    </citation>
    <scope>NUCLEOTIDE SEQUENCE [GENOMIC DNA]</scope>
    <source>
        <strain>SP870</strain>
    </source>
</reference>
<reference key="2">
    <citation type="journal article" date="2002" name="Nature">
        <title>The genome sequence of Schizosaccharomyces pombe.</title>
        <authorList>
            <person name="Wood V."/>
            <person name="Gwilliam R."/>
            <person name="Rajandream M.A."/>
            <person name="Lyne M.H."/>
            <person name="Lyne R."/>
            <person name="Stewart A."/>
            <person name="Sgouros J.G."/>
            <person name="Peat N."/>
            <person name="Hayles J."/>
            <person name="Baker S.G."/>
            <person name="Basham D."/>
            <person name="Bowman S."/>
            <person name="Brooks K."/>
            <person name="Brown D."/>
            <person name="Brown S."/>
            <person name="Chillingworth T."/>
            <person name="Churcher C.M."/>
            <person name="Collins M."/>
            <person name="Connor R."/>
            <person name="Cronin A."/>
            <person name="Davis P."/>
            <person name="Feltwell T."/>
            <person name="Fraser A."/>
            <person name="Gentles S."/>
            <person name="Goble A."/>
            <person name="Hamlin N."/>
            <person name="Harris D.E."/>
            <person name="Hidalgo J."/>
            <person name="Hodgson G."/>
            <person name="Holroyd S."/>
            <person name="Hornsby T."/>
            <person name="Howarth S."/>
            <person name="Huckle E.J."/>
            <person name="Hunt S."/>
            <person name="Jagels K."/>
            <person name="James K.D."/>
            <person name="Jones L."/>
            <person name="Jones M."/>
            <person name="Leather S."/>
            <person name="McDonald S."/>
            <person name="McLean J."/>
            <person name="Mooney P."/>
            <person name="Moule S."/>
            <person name="Mungall K.L."/>
            <person name="Murphy L.D."/>
            <person name="Niblett D."/>
            <person name="Odell C."/>
            <person name="Oliver K."/>
            <person name="O'Neil S."/>
            <person name="Pearson D."/>
            <person name="Quail M.A."/>
            <person name="Rabbinowitsch E."/>
            <person name="Rutherford K.M."/>
            <person name="Rutter S."/>
            <person name="Saunders D."/>
            <person name="Seeger K."/>
            <person name="Sharp S."/>
            <person name="Skelton J."/>
            <person name="Simmonds M.N."/>
            <person name="Squares R."/>
            <person name="Squares S."/>
            <person name="Stevens K."/>
            <person name="Taylor K."/>
            <person name="Taylor R.G."/>
            <person name="Tivey A."/>
            <person name="Walsh S.V."/>
            <person name="Warren T."/>
            <person name="Whitehead S."/>
            <person name="Woodward J.R."/>
            <person name="Volckaert G."/>
            <person name="Aert R."/>
            <person name="Robben J."/>
            <person name="Grymonprez B."/>
            <person name="Weltjens I."/>
            <person name="Vanstreels E."/>
            <person name="Rieger M."/>
            <person name="Schaefer M."/>
            <person name="Mueller-Auer S."/>
            <person name="Gabel C."/>
            <person name="Fuchs M."/>
            <person name="Duesterhoeft A."/>
            <person name="Fritzc C."/>
            <person name="Holzer E."/>
            <person name="Moestl D."/>
            <person name="Hilbert H."/>
            <person name="Borzym K."/>
            <person name="Langer I."/>
            <person name="Beck A."/>
            <person name="Lehrach H."/>
            <person name="Reinhardt R."/>
            <person name="Pohl T.M."/>
            <person name="Eger P."/>
            <person name="Zimmermann W."/>
            <person name="Wedler H."/>
            <person name="Wambutt R."/>
            <person name="Purnelle B."/>
            <person name="Goffeau A."/>
            <person name="Cadieu E."/>
            <person name="Dreano S."/>
            <person name="Gloux S."/>
            <person name="Lelaure V."/>
            <person name="Mottier S."/>
            <person name="Galibert F."/>
            <person name="Aves S.J."/>
            <person name="Xiang Z."/>
            <person name="Hunt C."/>
            <person name="Moore K."/>
            <person name="Hurst S.M."/>
            <person name="Lucas M."/>
            <person name="Rochet M."/>
            <person name="Gaillardin C."/>
            <person name="Tallada V.A."/>
            <person name="Garzon A."/>
            <person name="Thode G."/>
            <person name="Daga R.R."/>
            <person name="Cruzado L."/>
            <person name="Jimenez J."/>
            <person name="Sanchez M."/>
            <person name="del Rey F."/>
            <person name="Benito J."/>
            <person name="Dominguez A."/>
            <person name="Revuelta J.L."/>
            <person name="Moreno S."/>
            <person name="Armstrong J."/>
            <person name="Forsburg S.L."/>
            <person name="Cerutti L."/>
            <person name="Lowe T."/>
            <person name="McCombie W.R."/>
            <person name="Paulsen I."/>
            <person name="Potashkin J."/>
            <person name="Shpakovski G.V."/>
            <person name="Ussery D."/>
            <person name="Barrell B.G."/>
            <person name="Nurse P."/>
        </authorList>
    </citation>
    <scope>NUCLEOTIDE SEQUENCE [LARGE SCALE GENOMIC DNA]</scope>
    <source>
        <strain>972 / ATCC 24843</strain>
    </source>
</reference>
<protein>
    <recommendedName>
        <fullName>Protein scd2/ral3</fullName>
    </recommendedName>
</protein>
<keyword id="KW-1185">Reference proteome</keyword>
<keyword id="KW-0677">Repeat</keyword>
<keyword id="KW-0728">SH3 domain</keyword>
<comment type="function">
    <text>Required for mating and morphogenesis. Interacts directly with scd1 and with cdc42. May bridge and facilitate scd1 and cdc42 interactions.</text>
</comment>
<comment type="subunit">
    <text>Scd1, scd2, cdc42, and ras1, in its GTP-bound state, act cooperatively to form a protein complex.</text>
</comment>
<gene>
    <name type="primary">scd2</name>
    <name type="synonym">ral3</name>
    <name type="ORF">SPAC22H10.07</name>
</gene>
<accession>P40996</accession>
<evidence type="ECO:0000255" key="1">
    <source>
        <dbReference type="PROSITE-ProRule" id="PRU00147"/>
    </source>
</evidence>
<evidence type="ECO:0000255" key="2">
    <source>
        <dbReference type="PROSITE-ProRule" id="PRU00192"/>
    </source>
</evidence>
<evidence type="ECO:0000255" key="3">
    <source>
        <dbReference type="PROSITE-ProRule" id="PRU01081"/>
    </source>
</evidence>
<evidence type="ECO:0000256" key="4">
    <source>
        <dbReference type="SAM" id="MobiDB-lite"/>
    </source>
</evidence>
<sequence>MLKIKRTWKTHSRILDKDPFSIEPPRKVIRALYDYTARKATEVSFAKGDFFHVIGRENDKAWYEVCNPAAGTRGFVPVSHFEEIGKTVKSERDSDGSGQISFTDLTTNSSTTRSSISELHSGSQPLFGIVQFDFAAERPDELEAKAGEAIIIIARSNHEWLVAKPIGRLGGPGLIPLSFIQLRDLKTGAVIKDVSEAVLRISCIPRVEDWKRAAADYKKSSIPLGKFSDGETQTMPSLSPSTENLQINNDVTYQAATDNSSTFPGSVANELTPLQTLESRTASIASKNKKDMSSEPTVVAAMVENYMIRDDQYWYLVRAVMSDGKHRNLCRYYEDFFNFQTKFLELFPNEAGRGDERRVIPYMPGPVDDVNELISSQRAMDLDVYLKEMCRLPARLLENELVKLFFLPLDGDVESPHPTSTMPEALPREPLSFSLPEKAPEKATNISIPESAPTTAGSTCKVKVRLGDETFALRVPSDISFEDFCERLTNKLGECEHLSYRDTNANKVLPLNNVDDLRKACSQESGVLLFAERRRF</sequence>
<organism>
    <name type="scientific">Schizosaccharomyces pombe (strain 972 / ATCC 24843)</name>
    <name type="common">Fission yeast</name>
    <dbReference type="NCBI Taxonomy" id="284812"/>
    <lineage>
        <taxon>Eukaryota</taxon>
        <taxon>Fungi</taxon>
        <taxon>Dikarya</taxon>
        <taxon>Ascomycota</taxon>
        <taxon>Taphrinomycotina</taxon>
        <taxon>Schizosaccharomycetes</taxon>
        <taxon>Schizosaccharomycetales</taxon>
        <taxon>Schizosaccharomycetaceae</taxon>
        <taxon>Schizosaccharomyces</taxon>
    </lineage>
</organism>
<feature type="chain" id="PRO_0000097620" description="Protein scd2/ral3">
    <location>
        <begin position="1"/>
        <end position="536"/>
    </location>
</feature>
<feature type="domain" description="SH3 1" evidence="2">
    <location>
        <begin position="24"/>
        <end position="86"/>
    </location>
</feature>
<feature type="domain" description="SH3 2" evidence="2">
    <location>
        <begin position="123"/>
        <end position="185"/>
    </location>
</feature>
<feature type="domain" description="PX" evidence="1">
    <location>
        <begin position="293"/>
        <end position="413"/>
    </location>
</feature>
<feature type="domain" description="PB1" evidence="3">
    <location>
        <begin position="459"/>
        <end position="533"/>
    </location>
</feature>
<feature type="region of interest" description="Disordered" evidence="4">
    <location>
        <begin position="88"/>
        <end position="115"/>
    </location>
</feature>
<feature type="compositionally biased region" description="Low complexity" evidence="4">
    <location>
        <begin position="101"/>
        <end position="115"/>
    </location>
</feature>
<dbReference type="EMBL" id="U12539">
    <property type="protein sequence ID" value="AAA50557.1"/>
    <property type="molecule type" value="Genomic_DNA"/>
</dbReference>
<dbReference type="EMBL" id="CU329670">
    <property type="protein sequence ID" value="CAA93608.1"/>
    <property type="molecule type" value="Genomic_DNA"/>
</dbReference>
<dbReference type="PIR" id="T38210">
    <property type="entry name" value="T38210"/>
</dbReference>
<dbReference type="RefSeq" id="NP_593744.1">
    <property type="nucleotide sequence ID" value="NM_001019175.2"/>
</dbReference>
<dbReference type="SMR" id="P40996"/>
<dbReference type="BioGRID" id="278220">
    <property type="interactions" value="12"/>
</dbReference>
<dbReference type="FunCoup" id="P40996">
    <property type="interactions" value="108"/>
</dbReference>
<dbReference type="MINT" id="P40996"/>
<dbReference type="STRING" id="284812.P40996"/>
<dbReference type="iPTMnet" id="P40996"/>
<dbReference type="PaxDb" id="4896-SPAC22H10.07.1"/>
<dbReference type="EnsemblFungi" id="SPAC22H10.07.1">
    <property type="protein sequence ID" value="SPAC22H10.07.1:pep"/>
    <property type="gene ID" value="SPAC22H10.07"/>
</dbReference>
<dbReference type="GeneID" id="2541726"/>
<dbReference type="KEGG" id="spo:2541726"/>
<dbReference type="PomBase" id="SPAC22H10.07">
    <property type="gene designation" value="scd2"/>
</dbReference>
<dbReference type="VEuPathDB" id="FungiDB:SPAC22H10.07"/>
<dbReference type="eggNOG" id="KOG4773">
    <property type="taxonomic scope" value="Eukaryota"/>
</dbReference>
<dbReference type="HOGENOM" id="CLU_014957_0_1_1"/>
<dbReference type="InParanoid" id="P40996"/>
<dbReference type="OMA" id="YDFQINF"/>
<dbReference type="PhylomeDB" id="P40996"/>
<dbReference type="Reactome" id="R-SPO-5668599">
    <property type="pathway name" value="RHO GTPases Activate NADPH Oxidases"/>
</dbReference>
<dbReference type="Reactome" id="R-SPO-8941237">
    <property type="pathway name" value="Invadopodia formation"/>
</dbReference>
<dbReference type="PRO" id="PR:P40996"/>
<dbReference type="Proteomes" id="UP000002485">
    <property type="component" value="Chromosome I"/>
</dbReference>
<dbReference type="GO" id="GO:0071521">
    <property type="term" value="C:Cdc42 GTPase complex"/>
    <property type="evidence" value="ECO:0000304"/>
    <property type="project" value="PomBase"/>
</dbReference>
<dbReference type="GO" id="GO:0032153">
    <property type="term" value="C:cell division site"/>
    <property type="evidence" value="ECO:0000314"/>
    <property type="project" value="PomBase"/>
</dbReference>
<dbReference type="GO" id="GO:0051286">
    <property type="term" value="C:cell tip"/>
    <property type="evidence" value="ECO:0007005"/>
    <property type="project" value="PomBase"/>
</dbReference>
<dbReference type="GO" id="GO:0090726">
    <property type="term" value="C:cortical dynamic polarity patch"/>
    <property type="evidence" value="ECO:0000314"/>
    <property type="project" value="PomBase"/>
</dbReference>
<dbReference type="GO" id="GO:0005737">
    <property type="term" value="C:cytoplasm"/>
    <property type="evidence" value="ECO:0000318"/>
    <property type="project" value="GO_Central"/>
</dbReference>
<dbReference type="GO" id="GO:0005829">
    <property type="term" value="C:cytosol"/>
    <property type="evidence" value="ECO:0007005"/>
    <property type="project" value="PomBase"/>
</dbReference>
<dbReference type="GO" id="GO:0043332">
    <property type="term" value="C:mating projection tip"/>
    <property type="evidence" value="ECO:0000314"/>
    <property type="project" value="PomBase"/>
</dbReference>
<dbReference type="GO" id="GO:0005634">
    <property type="term" value="C:nucleus"/>
    <property type="evidence" value="ECO:0007005"/>
    <property type="project" value="PomBase"/>
</dbReference>
<dbReference type="GO" id="GO:0031520">
    <property type="term" value="C:plasma membrane of cell tip"/>
    <property type="evidence" value="ECO:0000269"/>
    <property type="project" value="PomBase"/>
</dbReference>
<dbReference type="GO" id="GO:0035091">
    <property type="term" value="F:phosphatidylinositol binding"/>
    <property type="evidence" value="ECO:0000255"/>
    <property type="project" value="PomBase"/>
</dbReference>
<dbReference type="GO" id="GO:0030674">
    <property type="term" value="F:protein-macromolecule adaptor activity"/>
    <property type="evidence" value="ECO:0000315"/>
    <property type="project" value="PomBase"/>
</dbReference>
<dbReference type="GO" id="GO:0000747">
    <property type="term" value="P:conjugation with cellular fusion"/>
    <property type="evidence" value="ECO:0000318"/>
    <property type="project" value="GO_Central"/>
</dbReference>
<dbReference type="GO" id="GO:0030010">
    <property type="term" value="P:establishment of cell polarity"/>
    <property type="evidence" value="ECO:0000315"/>
    <property type="project" value="PomBase"/>
</dbReference>
<dbReference type="GO" id="GO:1902917">
    <property type="term" value="P:positive regulation of mating projection assembly"/>
    <property type="evidence" value="ECO:0000315"/>
    <property type="project" value="PomBase"/>
</dbReference>
<dbReference type="GO" id="GO:0031137">
    <property type="term" value="P:regulation of conjugation with cellular fusion"/>
    <property type="evidence" value="ECO:0000315"/>
    <property type="project" value="PomBase"/>
</dbReference>
<dbReference type="GO" id="GO:0032878">
    <property type="term" value="P:regulation of establishment or maintenance of cell polarity"/>
    <property type="evidence" value="ECO:0000315"/>
    <property type="project" value="PomBase"/>
</dbReference>
<dbReference type="CDD" id="cd05992">
    <property type="entry name" value="PB1"/>
    <property type="match status" value="1"/>
</dbReference>
<dbReference type="CDD" id="cd06890">
    <property type="entry name" value="PX_Bem1p"/>
    <property type="match status" value="1"/>
</dbReference>
<dbReference type="CDD" id="cd11878">
    <property type="entry name" value="SH3_Bem1p_1"/>
    <property type="match status" value="1"/>
</dbReference>
<dbReference type="CDD" id="cd11879">
    <property type="entry name" value="SH3_Bem1p_2"/>
    <property type="match status" value="1"/>
</dbReference>
<dbReference type="FunFam" id="2.30.30.40:FF:000093">
    <property type="entry name" value="Protein kinase activator Bem1"/>
    <property type="match status" value="1"/>
</dbReference>
<dbReference type="Gene3D" id="3.10.20.90">
    <property type="entry name" value="Phosphatidylinositol 3-kinase Catalytic Subunit, Chain A, domain 1"/>
    <property type="match status" value="1"/>
</dbReference>
<dbReference type="Gene3D" id="3.30.1520.10">
    <property type="entry name" value="Phox-like domain"/>
    <property type="match status" value="1"/>
</dbReference>
<dbReference type="Gene3D" id="2.30.30.40">
    <property type="entry name" value="SH3 Domains"/>
    <property type="match status" value="2"/>
</dbReference>
<dbReference type="InterPro" id="IPR035550">
    <property type="entry name" value="Bem1/Scd2_PX"/>
</dbReference>
<dbReference type="InterPro" id="IPR035548">
    <property type="entry name" value="Bem1/Scd2_SH3_1"/>
</dbReference>
<dbReference type="InterPro" id="IPR035549">
    <property type="entry name" value="Bem1/Scd2_SH3_2"/>
</dbReference>
<dbReference type="InterPro" id="IPR018247">
    <property type="entry name" value="EF_Hand_1_Ca_BS"/>
</dbReference>
<dbReference type="InterPro" id="IPR051228">
    <property type="entry name" value="NADPH_Oxidase/PX-Domain"/>
</dbReference>
<dbReference type="InterPro" id="IPR053793">
    <property type="entry name" value="PB1-like"/>
</dbReference>
<dbReference type="InterPro" id="IPR000270">
    <property type="entry name" value="PB1_dom"/>
</dbReference>
<dbReference type="InterPro" id="IPR001683">
    <property type="entry name" value="PX_dom"/>
</dbReference>
<dbReference type="InterPro" id="IPR036871">
    <property type="entry name" value="PX_dom_sf"/>
</dbReference>
<dbReference type="InterPro" id="IPR036028">
    <property type="entry name" value="SH3-like_dom_sf"/>
</dbReference>
<dbReference type="InterPro" id="IPR001452">
    <property type="entry name" value="SH3_domain"/>
</dbReference>
<dbReference type="PANTHER" id="PTHR15706:SF2">
    <property type="entry name" value="SH3 AND PX DOMAIN-CONTAINING PROTEIN 2A"/>
    <property type="match status" value="1"/>
</dbReference>
<dbReference type="PANTHER" id="PTHR15706">
    <property type="entry name" value="SH3 MULTIPLE DOMAIN"/>
    <property type="match status" value="1"/>
</dbReference>
<dbReference type="Pfam" id="PF00787">
    <property type="entry name" value="PX"/>
    <property type="match status" value="1"/>
</dbReference>
<dbReference type="Pfam" id="PF00018">
    <property type="entry name" value="SH3_1"/>
    <property type="match status" value="2"/>
</dbReference>
<dbReference type="SMART" id="SM00666">
    <property type="entry name" value="PB1"/>
    <property type="match status" value="1"/>
</dbReference>
<dbReference type="SMART" id="SM00312">
    <property type="entry name" value="PX"/>
    <property type="match status" value="1"/>
</dbReference>
<dbReference type="SMART" id="SM00326">
    <property type="entry name" value="SH3"/>
    <property type="match status" value="2"/>
</dbReference>
<dbReference type="SUPFAM" id="SSF54277">
    <property type="entry name" value="CAD &amp; PB1 domains"/>
    <property type="match status" value="1"/>
</dbReference>
<dbReference type="SUPFAM" id="SSF64268">
    <property type="entry name" value="PX domain"/>
    <property type="match status" value="1"/>
</dbReference>
<dbReference type="SUPFAM" id="SSF50044">
    <property type="entry name" value="SH3-domain"/>
    <property type="match status" value="2"/>
</dbReference>
<dbReference type="PROSITE" id="PS51745">
    <property type="entry name" value="PB1"/>
    <property type="match status" value="1"/>
</dbReference>
<dbReference type="PROSITE" id="PS50195">
    <property type="entry name" value="PX"/>
    <property type="match status" value="1"/>
</dbReference>
<dbReference type="PROSITE" id="PS50002">
    <property type="entry name" value="SH3"/>
    <property type="match status" value="2"/>
</dbReference>
<proteinExistence type="predicted"/>
<name>SCD2_SCHPO</name>